<evidence type="ECO:0000255" key="1">
    <source>
        <dbReference type="HAMAP-Rule" id="MF_00038"/>
    </source>
</evidence>
<organism>
    <name type="scientific">Klebsiella pneumoniae (strain 342)</name>
    <dbReference type="NCBI Taxonomy" id="507522"/>
    <lineage>
        <taxon>Bacteria</taxon>
        <taxon>Pseudomonadati</taxon>
        <taxon>Pseudomonadota</taxon>
        <taxon>Gammaproteobacteria</taxon>
        <taxon>Enterobacterales</taxon>
        <taxon>Enterobacteriaceae</taxon>
        <taxon>Klebsiella/Raoultella group</taxon>
        <taxon>Klebsiella</taxon>
        <taxon>Klebsiella pneumoniae complex</taxon>
    </lineage>
</organism>
<protein>
    <recommendedName>
        <fullName evidence="1">Phospho-N-acetylmuramoyl-pentapeptide-transferase</fullName>
        <ecNumber evidence="1">2.7.8.13</ecNumber>
    </recommendedName>
    <alternativeName>
        <fullName evidence="1">UDP-MurNAc-pentapeptide phosphotransferase</fullName>
    </alternativeName>
</protein>
<dbReference type="EC" id="2.7.8.13" evidence="1"/>
<dbReference type="EMBL" id="CP000964">
    <property type="protein sequence ID" value="ACI11896.1"/>
    <property type="molecule type" value="Genomic_DNA"/>
</dbReference>
<dbReference type="SMR" id="B5Y1V0"/>
<dbReference type="KEGG" id="kpe:KPK_4650"/>
<dbReference type="HOGENOM" id="CLU_023982_0_0_6"/>
<dbReference type="UniPathway" id="UPA00219"/>
<dbReference type="Proteomes" id="UP000001734">
    <property type="component" value="Chromosome"/>
</dbReference>
<dbReference type="GO" id="GO:0005886">
    <property type="term" value="C:plasma membrane"/>
    <property type="evidence" value="ECO:0007669"/>
    <property type="project" value="UniProtKB-SubCell"/>
</dbReference>
<dbReference type="GO" id="GO:0046872">
    <property type="term" value="F:metal ion binding"/>
    <property type="evidence" value="ECO:0007669"/>
    <property type="project" value="UniProtKB-KW"/>
</dbReference>
<dbReference type="GO" id="GO:0008963">
    <property type="term" value="F:phospho-N-acetylmuramoyl-pentapeptide-transferase activity"/>
    <property type="evidence" value="ECO:0007669"/>
    <property type="project" value="UniProtKB-UniRule"/>
</dbReference>
<dbReference type="GO" id="GO:0051992">
    <property type="term" value="F:UDP-N-acetylmuramoyl-L-alanyl-D-glutamyl-meso-2,6-diaminopimelyl-D-alanyl-D-alanine:undecaprenyl-phosphate transferase activity"/>
    <property type="evidence" value="ECO:0007669"/>
    <property type="project" value="RHEA"/>
</dbReference>
<dbReference type="GO" id="GO:0051301">
    <property type="term" value="P:cell division"/>
    <property type="evidence" value="ECO:0007669"/>
    <property type="project" value="UniProtKB-KW"/>
</dbReference>
<dbReference type="GO" id="GO:0071555">
    <property type="term" value="P:cell wall organization"/>
    <property type="evidence" value="ECO:0007669"/>
    <property type="project" value="UniProtKB-KW"/>
</dbReference>
<dbReference type="GO" id="GO:0009252">
    <property type="term" value="P:peptidoglycan biosynthetic process"/>
    <property type="evidence" value="ECO:0007669"/>
    <property type="project" value="UniProtKB-UniRule"/>
</dbReference>
<dbReference type="GO" id="GO:0008360">
    <property type="term" value="P:regulation of cell shape"/>
    <property type="evidence" value="ECO:0007669"/>
    <property type="project" value="UniProtKB-KW"/>
</dbReference>
<dbReference type="CDD" id="cd06852">
    <property type="entry name" value="GT_MraY"/>
    <property type="match status" value="1"/>
</dbReference>
<dbReference type="HAMAP" id="MF_00038">
    <property type="entry name" value="MraY"/>
    <property type="match status" value="1"/>
</dbReference>
<dbReference type="InterPro" id="IPR000715">
    <property type="entry name" value="Glycosyl_transferase_4"/>
</dbReference>
<dbReference type="InterPro" id="IPR003524">
    <property type="entry name" value="PNAcMuramoyl-5peptid_Trfase"/>
</dbReference>
<dbReference type="InterPro" id="IPR018480">
    <property type="entry name" value="PNAcMuramoyl-5peptid_Trfase_CS"/>
</dbReference>
<dbReference type="NCBIfam" id="TIGR00445">
    <property type="entry name" value="mraY"/>
    <property type="match status" value="1"/>
</dbReference>
<dbReference type="PANTHER" id="PTHR22926">
    <property type="entry name" value="PHOSPHO-N-ACETYLMURAMOYL-PENTAPEPTIDE-TRANSFERASE"/>
    <property type="match status" value="1"/>
</dbReference>
<dbReference type="PANTHER" id="PTHR22926:SF5">
    <property type="entry name" value="PHOSPHO-N-ACETYLMURAMOYL-PENTAPEPTIDE-TRANSFERASE HOMOLOG"/>
    <property type="match status" value="1"/>
</dbReference>
<dbReference type="Pfam" id="PF00953">
    <property type="entry name" value="Glycos_transf_4"/>
    <property type="match status" value="1"/>
</dbReference>
<dbReference type="Pfam" id="PF10555">
    <property type="entry name" value="MraY_sig1"/>
    <property type="match status" value="1"/>
</dbReference>
<dbReference type="PROSITE" id="PS01347">
    <property type="entry name" value="MRAY_1"/>
    <property type="match status" value="1"/>
</dbReference>
<dbReference type="PROSITE" id="PS01348">
    <property type="entry name" value="MRAY_2"/>
    <property type="match status" value="1"/>
</dbReference>
<keyword id="KW-0131">Cell cycle</keyword>
<keyword id="KW-0132">Cell division</keyword>
<keyword id="KW-0997">Cell inner membrane</keyword>
<keyword id="KW-1003">Cell membrane</keyword>
<keyword id="KW-0133">Cell shape</keyword>
<keyword id="KW-0961">Cell wall biogenesis/degradation</keyword>
<keyword id="KW-0460">Magnesium</keyword>
<keyword id="KW-0472">Membrane</keyword>
<keyword id="KW-0479">Metal-binding</keyword>
<keyword id="KW-0573">Peptidoglycan synthesis</keyword>
<keyword id="KW-0808">Transferase</keyword>
<keyword id="KW-0812">Transmembrane</keyword>
<keyword id="KW-1133">Transmembrane helix</keyword>
<gene>
    <name evidence="1" type="primary">mraY</name>
    <name type="ordered locus">KPK_4650</name>
</gene>
<comment type="function">
    <text evidence="1">Catalyzes the initial step of the lipid cycle reactions in the biosynthesis of the cell wall peptidoglycan: transfers peptidoglycan precursor phospho-MurNAc-pentapeptide from UDP-MurNAc-pentapeptide onto the lipid carrier undecaprenyl phosphate, yielding undecaprenyl-pyrophosphoryl-MurNAc-pentapeptide, known as lipid I.</text>
</comment>
<comment type="catalytic activity">
    <reaction evidence="1">
        <text>UDP-N-acetyl-alpha-D-muramoyl-L-alanyl-gamma-D-glutamyl-meso-2,6-diaminopimeloyl-D-alanyl-D-alanine + di-trans,octa-cis-undecaprenyl phosphate = di-trans,octa-cis-undecaprenyl diphospho-N-acetyl-alpha-D-muramoyl-L-alanyl-D-glutamyl-meso-2,6-diaminopimeloyl-D-alanyl-D-alanine + UMP</text>
        <dbReference type="Rhea" id="RHEA:28386"/>
        <dbReference type="ChEBI" id="CHEBI:57865"/>
        <dbReference type="ChEBI" id="CHEBI:60392"/>
        <dbReference type="ChEBI" id="CHEBI:61386"/>
        <dbReference type="ChEBI" id="CHEBI:61387"/>
        <dbReference type="EC" id="2.7.8.13"/>
    </reaction>
</comment>
<comment type="cofactor">
    <cofactor evidence="1">
        <name>Mg(2+)</name>
        <dbReference type="ChEBI" id="CHEBI:18420"/>
    </cofactor>
</comment>
<comment type="pathway">
    <text evidence="1">Cell wall biogenesis; peptidoglycan biosynthesis.</text>
</comment>
<comment type="subcellular location">
    <subcellularLocation>
        <location evidence="1">Cell inner membrane</location>
        <topology evidence="1">Multi-pass membrane protein</topology>
    </subcellularLocation>
</comment>
<comment type="similarity">
    <text evidence="1">Belongs to the glycosyltransferase 4 family. MraY subfamily.</text>
</comment>
<feature type="chain" id="PRO_1000090634" description="Phospho-N-acetylmuramoyl-pentapeptide-transferase">
    <location>
        <begin position="1"/>
        <end position="360"/>
    </location>
</feature>
<feature type="transmembrane region" description="Helical" evidence="1">
    <location>
        <begin position="26"/>
        <end position="46"/>
    </location>
</feature>
<feature type="transmembrane region" description="Helical" evidence="1">
    <location>
        <begin position="72"/>
        <end position="92"/>
    </location>
</feature>
<feature type="transmembrane region" description="Helical" evidence="1">
    <location>
        <begin position="94"/>
        <end position="114"/>
    </location>
</feature>
<feature type="transmembrane region" description="Helical" evidence="1">
    <location>
        <begin position="132"/>
        <end position="152"/>
    </location>
</feature>
<feature type="transmembrane region" description="Helical" evidence="1">
    <location>
        <begin position="168"/>
        <end position="188"/>
    </location>
</feature>
<feature type="transmembrane region" description="Helical" evidence="1">
    <location>
        <begin position="199"/>
        <end position="219"/>
    </location>
</feature>
<feature type="transmembrane region" description="Helical" evidence="1">
    <location>
        <begin position="236"/>
        <end position="256"/>
    </location>
</feature>
<feature type="transmembrane region" description="Helical" evidence="1">
    <location>
        <begin position="263"/>
        <end position="283"/>
    </location>
</feature>
<feature type="transmembrane region" description="Helical" evidence="1">
    <location>
        <begin position="288"/>
        <end position="308"/>
    </location>
</feature>
<feature type="transmembrane region" description="Helical" evidence="1">
    <location>
        <begin position="338"/>
        <end position="358"/>
    </location>
</feature>
<sequence length="360" mass="39920">MLVWLAEHLVKYYSGFNVFSYLTFRAIVSLLTALFISLWMGPRMIARLQKLSFGQVVRNDGPESHFSKRGTPTMGGIMILTAITVSVLLWAYPSNPYVWCVLTVLIGYGIIGFVDDYRKVVRKDTKGLIARWKYFWMSVIALGVAFALYLAGKDTPATELVVPFFKDVMPQLGLLYILLAYFVIVGTGNAVNLTDGLDGLAIMPTVFVAAGFALVAWATGNMNFANYLHIPYLRHAGELVIVCTAIVGAGLGFLWFNTYPAQVFMGDVGSLALGGALGIIAVLLRQEFLLVIMGGVFVVETLSVILQVGSFKLRGQRIFRMAPIHHHYELKGWPEPRVIVRFWIISLMLVLIGLATLKVR</sequence>
<accession>B5Y1V0</accession>
<reference key="1">
    <citation type="journal article" date="2008" name="PLoS Genet.">
        <title>Complete genome sequence of the N2-fixing broad host range endophyte Klebsiella pneumoniae 342 and virulence predictions verified in mice.</title>
        <authorList>
            <person name="Fouts D.E."/>
            <person name="Tyler H.L."/>
            <person name="DeBoy R.T."/>
            <person name="Daugherty S."/>
            <person name="Ren Q."/>
            <person name="Badger J.H."/>
            <person name="Durkin A.S."/>
            <person name="Huot H."/>
            <person name="Shrivastava S."/>
            <person name="Kothari S."/>
            <person name="Dodson R.J."/>
            <person name="Mohamoud Y."/>
            <person name="Khouri H."/>
            <person name="Roesch L.F.W."/>
            <person name="Krogfelt K.A."/>
            <person name="Struve C."/>
            <person name="Triplett E.W."/>
            <person name="Methe B.A."/>
        </authorList>
    </citation>
    <scope>NUCLEOTIDE SEQUENCE [LARGE SCALE GENOMIC DNA]</scope>
    <source>
        <strain>342</strain>
    </source>
</reference>
<proteinExistence type="inferred from homology"/>
<name>MRAY_KLEP3</name>